<keyword id="KW-0130">Cell adhesion</keyword>
<keyword id="KW-1015">Disulfide bond</keyword>
<keyword id="KW-0272">Extracellular matrix</keyword>
<keyword id="KW-0325">Glycoprotein</keyword>
<keyword id="KW-0433">Leucine-rich repeat</keyword>
<keyword id="KW-0654">Proteoglycan</keyword>
<keyword id="KW-1185">Reference proteome</keyword>
<keyword id="KW-0677">Repeat</keyword>
<keyword id="KW-0964">Secreted</keyword>
<keyword id="KW-0732">Signal</keyword>
<keyword id="KW-0765">Sulfation</keyword>
<organism>
    <name type="scientific">Mus musculus</name>
    <name type="common">Mouse</name>
    <dbReference type="NCBI Taxonomy" id="10090"/>
    <lineage>
        <taxon>Eukaryota</taxon>
        <taxon>Metazoa</taxon>
        <taxon>Chordata</taxon>
        <taxon>Craniata</taxon>
        <taxon>Vertebrata</taxon>
        <taxon>Euteleostomi</taxon>
        <taxon>Mammalia</taxon>
        <taxon>Eutheria</taxon>
        <taxon>Euarchontoglires</taxon>
        <taxon>Glires</taxon>
        <taxon>Rodentia</taxon>
        <taxon>Myomorpha</taxon>
        <taxon>Muroidea</taxon>
        <taxon>Muridae</taxon>
        <taxon>Murinae</taxon>
        <taxon>Mus</taxon>
        <taxon>Mus</taxon>
    </lineage>
</organism>
<feature type="signal peptide" evidence="3">
    <location>
        <begin position="1"/>
        <end position="20"/>
    </location>
</feature>
<feature type="chain" id="PRO_0000032755" description="Osteomodulin">
    <location>
        <begin position="21"/>
        <end position="423"/>
    </location>
</feature>
<feature type="domain" description="LRRNT">
    <location>
        <begin position="53"/>
        <end position="91"/>
    </location>
</feature>
<feature type="repeat" description="LRR 1">
    <location>
        <begin position="92"/>
        <end position="113"/>
    </location>
</feature>
<feature type="repeat" description="LRR 2">
    <location>
        <begin position="116"/>
        <end position="129"/>
    </location>
</feature>
<feature type="repeat" description="LRR 3">
    <location>
        <begin position="142"/>
        <end position="164"/>
    </location>
</feature>
<feature type="repeat" description="LRR 4">
    <location>
        <begin position="165"/>
        <end position="184"/>
    </location>
</feature>
<feature type="repeat" description="LRR 5">
    <location>
        <begin position="187"/>
        <end position="207"/>
    </location>
</feature>
<feature type="repeat" description="LRR 6">
    <location>
        <begin position="213"/>
        <end position="233"/>
    </location>
</feature>
<feature type="repeat" description="LRR 7">
    <location>
        <begin position="234"/>
        <end position="255"/>
    </location>
</feature>
<feature type="repeat" description="LRR 8">
    <location>
        <begin position="258"/>
        <end position="279"/>
    </location>
</feature>
<feature type="repeat" description="LRR 9">
    <location>
        <begin position="281"/>
        <end position="294"/>
    </location>
</feature>
<feature type="repeat" description="LRR 10">
    <location>
        <begin position="301"/>
        <end position="322"/>
    </location>
</feature>
<feature type="repeat" description="LRR 11">
    <location>
        <begin position="331"/>
        <end position="353"/>
    </location>
</feature>
<feature type="region of interest" description="Disordered" evidence="4">
    <location>
        <begin position="381"/>
        <end position="406"/>
    </location>
</feature>
<feature type="modified residue" description="Sulfotyrosine" evidence="1">
    <location>
        <position position="22"/>
    </location>
</feature>
<feature type="modified residue" description="Sulfotyrosine" evidence="1">
    <location>
        <position position="25"/>
    </location>
</feature>
<feature type="modified residue" description="Sulfotyrosine" evidence="1">
    <location>
        <position position="31"/>
    </location>
</feature>
<feature type="modified residue" description="Sulfotyrosine" evidence="1">
    <location>
        <position position="39"/>
    </location>
</feature>
<feature type="modified residue" description="Sulfotyrosine" evidence="1">
    <location>
        <position position="51"/>
    </location>
</feature>
<feature type="modified residue" description="Sulfotyrosine" evidence="1">
    <location>
        <position position="77"/>
    </location>
</feature>
<feature type="modified residue" description="Sulfotyrosine" evidence="1">
    <location>
        <position position="413"/>
    </location>
</feature>
<feature type="modified residue" description="Sulfotyrosine" evidence="1">
    <location>
        <position position="414"/>
    </location>
</feature>
<feature type="glycosylation site" description="N-linked (GlcNAc...) asparagine" evidence="3">
    <location>
        <position position="113"/>
    </location>
</feature>
<feature type="glycosylation site" description="N-linked (GlcNAc...) asparagine" evidence="3">
    <location>
        <position position="121"/>
    </location>
</feature>
<feature type="glycosylation site" description="N-linked (GlcNAc...) asparagine" evidence="3">
    <location>
        <position position="187"/>
    </location>
</feature>
<feature type="glycosylation site" description="N-linked (GlcNAc...) asparagine" evidence="3">
    <location>
        <position position="242"/>
    </location>
</feature>
<feature type="glycosylation site" description="N-linked (GlcNAc...) asparagine" evidence="3">
    <location>
        <position position="278"/>
    </location>
</feature>
<feature type="glycosylation site" description="N-linked (GlcNAc...) asparagine" evidence="3">
    <location>
        <position position="316"/>
    </location>
</feature>
<feature type="disulfide bond" evidence="1">
    <location>
        <begin position="321"/>
        <end position="353"/>
    </location>
</feature>
<dbReference type="EMBL" id="AB007848">
    <property type="protein sequence ID" value="BAA22790.1"/>
    <property type="molecule type" value="mRNA"/>
</dbReference>
<dbReference type="CCDS" id="CCDS26504.1"/>
<dbReference type="RefSeq" id="NP_001347637.1">
    <property type="nucleotide sequence ID" value="NM_001360708.1"/>
</dbReference>
<dbReference type="RefSeq" id="NP_036180.1">
    <property type="nucleotide sequence ID" value="NM_012050.3"/>
</dbReference>
<dbReference type="RefSeq" id="XP_006516991.1">
    <property type="nucleotide sequence ID" value="XM_006516928.2"/>
</dbReference>
<dbReference type="RefSeq" id="XP_017171009.1">
    <property type="nucleotide sequence ID" value="XM_017315520.1"/>
</dbReference>
<dbReference type="SMR" id="O35103"/>
<dbReference type="FunCoup" id="O35103">
    <property type="interactions" value="83"/>
</dbReference>
<dbReference type="STRING" id="10090.ENSMUSP00000152066"/>
<dbReference type="GlyCosmos" id="O35103">
    <property type="glycosylation" value="6 sites, No reported glycans"/>
</dbReference>
<dbReference type="GlyGen" id="O35103">
    <property type="glycosylation" value="6 sites"/>
</dbReference>
<dbReference type="PhosphoSitePlus" id="O35103"/>
<dbReference type="jPOST" id="O35103"/>
<dbReference type="PaxDb" id="10090-ENSMUSP00000065706"/>
<dbReference type="ProteomicsDB" id="294274"/>
<dbReference type="Antibodypedia" id="28259">
    <property type="antibodies" value="199 antibodies from 27 providers"/>
</dbReference>
<dbReference type="DNASU" id="27047"/>
<dbReference type="Ensembl" id="ENSMUST00000065494.8">
    <property type="protein sequence ID" value="ENSMUSP00000065706.8"/>
    <property type="gene ID" value="ENSMUSG00000048368.10"/>
</dbReference>
<dbReference type="Ensembl" id="ENSMUST00000221170.2">
    <property type="protein sequence ID" value="ENSMUSP00000152066.2"/>
    <property type="gene ID" value="ENSMUSG00000048368.10"/>
</dbReference>
<dbReference type="GeneID" id="27047"/>
<dbReference type="KEGG" id="mmu:27047"/>
<dbReference type="UCSC" id="uc007qjp.1">
    <property type="organism name" value="mouse"/>
</dbReference>
<dbReference type="AGR" id="MGI:1350918"/>
<dbReference type="CTD" id="4958"/>
<dbReference type="MGI" id="MGI:1350918">
    <property type="gene designation" value="Omd"/>
</dbReference>
<dbReference type="VEuPathDB" id="HostDB:ENSMUSG00000048368"/>
<dbReference type="eggNOG" id="KOG0619">
    <property type="taxonomic scope" value="Eukaryota"/>
</dbReference>
<dbReference type="GeneTree" id="ENSGT00940000160986"/>
<dbReference type="HOGENOM" id="CLU_000288_186_4_1"/>
<dbReference type="InParanoid" id="O35103"/>
<dbReference type="OMA" id="HYHHLTY"/>
<dbReference type="OrthoDB" id="1055097at2759"/>
<dbReference type="PhylomeDB" id="O35103"/>
<dbReference type="TreeFam" id="TF334562"/>
<dbReference type="Reactome" id="R-MMU-2022854">
    <property type="pathway name" value="Keratan sulfate biosynthesis"/>
</dbReference>
<dbReference type="Reactome" id="R-MMU-2022857">
    <property type="pathway name" value="Keratan sulfate degradation"/>
</dbReference>
<dbReference type="BioGRID-ORCS" id="27047">
    <property type="hits" value="3 hits in 77 CRISPR screens"/>
</dbReference>
<dbReference type="PRO" id="PR:O35103"/>
<dbReference type="Proteomes" id="UP000000589">
    <property type="component" value="Chromosome 13"/>
</dbReference>
<dbReference type="RNAct" id="O35103">
    <property type="molecule type" value="protein"/>
</dbReference>
<dbReference type="Bgee" id="ENSMUSG00000048368">
    <property type="expression patterns" value="Expressed in vault of skull and 123 other cell types or tissues"/>
</dbReference>
<dbReference type="GO" id="GO:0031012">
    <property type="term" value="C:extracellular matrix"/>
    <property type="evidence" value="ECO:0000314"/>
    <property type="project" value="MGI"/>
</dbReference>
<dbReference type="GO" id="GO:0005576">
    <property type="term" value="C:extracellular region"/>
    <property type="evidence" value="ECO:0007669"/>
    <property type="project" value="UniProtKB-KW"/>
</dbReference>
<dbReference type="GO" id="GO:0007155">
    <property type="term" value="P:cell adhesion"/>
    <property type="evidence" value="ECO:0007669"/>
    <property type="project" value="UniProtKB-KW"/>
</dbReference>
<dbReference type="FunFam" id="3.80.10.10:FF:000455">
    <property type="entry name" value="Osteomodulin"/>
    <property type="match status" value="1"/>
</dbReference>
<dbReference type="Gene3D" id="3.80.10.10">
    <property type="entry name" value="Ribonuclease Inhibitor"/>
    <property type="match status" value="3"/>
</dbReference>
<dbReference type="InterPro" id="IPR001611">
    <property type="entry name" value="Leu-rich_rpt"/>
</dbReference>
<dbReference type="InterPro" id="IPR003591">
    <property type="entry name" value="Leu-rich_rpt_typical-subtyp"/>
</dbReference>
<dbReference type="InterPro" id="IPR032675">
    <property type="entry name" value="LRR_dom_sf"/>
</dbReference>
<dbReference type="InterPro" id="IPR000372">
    <property type="entry name" value="LRRNT"/>
</dbReference>
<dbReference type="InterPro" id="IPR050333">
    <property type="entry name" value="SLRP"/>
</dbReference>
<dbReference type="PANTHER" id="PTHR45712">
    <property type="entry name" value="AGAP008170-PA"/>
    <property type="match status" value="1"/>
</dbReference>
<dbReference type="PANTHER" id="PTHR45712:SF3">
    <property type="entry name" value="OSTEOMODULIN"/>
    <property type="match status" value="1"/>
</dbReference>
<dbReference type="Pfam" id="PF13855">
    <property type="entry name" value="LRR_8"/>
    <property type="match status" value="2"/>
</dbReference>
<dbReference type="Pfam" id="PF01462">
    <property type="entry name" value="LRRNT"/>
    <property type="match status" value="1"/>
</dbReference>
<dbReference type="SMART" id="SM00364">
    <property type="entry name" value="LRR_BAC"/>
    <property type="match status" value="5"/>
</dbReference>
<dbReference type="SMART" id="SM00369">
    <property type="entry name" value="LRR_TYP"/>
    <property type="match status" value="8"/>
</dbReference>
<dbReference type="SMART" id="SM00013">
    <property type="entry name" value="LRRNT"/>
    <property type="match status" value="1"/>
</dbReference>
<dbReference type="SUPFAM" id="SSF52058">
    <property type="entry name" value="L domain-like"/>
    <property type="match status" value="1"/>
</dbReference>
<dbReference type="PROSITE" id="PS51450">
    <property type="entry name" value="LRR"/>
    <property type="match status" value="8"/>
</dbReference>
<protein>
    <recommendedName>
        <fullName>Osteomodulin</fullName>
    </recommendedName>
    <alternativeName>
        <fullName>Keratan sulfate proteoglycan osteomodulin</fullName>
        <shortName>KSPG osteomodulin</shortName>
    </alternativeName>
    <alternativeName>
        <fullName>Osteoadherin</fullName>
        <shortName>OSAD</shortName>
    </alternativeName>
</protein>
<proteinExistence type="evidence at transcript level"/>
<evidence type="ECO:0000250" key="1"/>
<evidence type="ECO:0000250" key="2">
    <source>
        <dbReference type="UniProtKB" id="O77742"/>
    </source>
</evidence>
<evidence type="ECO:0000255" key="3"/>
<evidence type="ECO:0000256" key="4">
    <source>
        <dbReference type="SAM" id="MobiDB-lite"/>
    </source>
</evidence>
<evidence type="ECO:0000305" key="5"/>
<name>OMD_MOUSE</name>
<gene>
    <name type="primary">Omd</name>
</gene>
<sequence length="423" mass="49745">MGFLSPIYVLFFCFGVRVYCQYEAYRWDDDYDQEPNEDYDPEFQFHQNIEYGVPFYNNILGCAKECFCPTNFPTSMYCDNRKLKTIPIIPMHIQQLNLQFNDIEAVTANSFINATHLKEINLSHNKIKSQKIDYGVFAKLSNLQQLHLEHNNLEEFPFPLPKSLERLLLGYNEISILPTNAMDGLVNVTMLDLCYNHLSDSMLKEKTLSKMEKLMQLNLCNNRLESMPLGLPSSLMYLSLENNSISSIPDNYFDKLPKLHALRISHNKLEDIPYDIFNLSNLIELNVGHNKLKQAFYIPRNLEHLYLQNNEIESINVTMICPSPDPVHHHHLTYLRVDQNKLKEPISSYIFFCFPRIHSIYYGEQRSTNGETIQLKTQVFRSYQEEEEEDDHDSQDNTLEGQEVSDEHYNSHYYEMQEWQDTI</sequence>
<reference key="1">
    <citation type="submission" date="1997-10" db="EMBL/GenBank/DDBJ databases">
        <title>The cloning and characterization of a cDNA for the novel bone matrix protein; osteomodulin.</title>
        <authorList>
            <person name="Ohno I."/>
            <person name="Matsubara K."/>
            <person name="Okubo K."/>
        </authorList>
    </citation>
    <scope>NUCLEOTIDE SEQUENCE [MRNA]</scope>
    <source>
        <strain>C57BL/6J</strain>
    </source>
</reference>
<comment type="function">
    <text evidence="2">May be implicated in biomineralization processes. Has a function in binding of osteoblasts via the alpha(V)beta(3)-integrin.</text>
</comment>
<comment type="subunit">
    <text evidence="2">Binds the alpha(V)beta(3)-integrin.</text>
</comment>
<comment type="subcellular location">
    <subcellularLocation>
        <location evidence="1">Secreted</location>
        <location evidence="1">Extracellular space</location>
        <location evidence="1">Extracellular matrix</location>
    </subcellularLocation>
</comment>
<comment type="tissue specificity">
    <text>Bone specific.</text>
</comment>
<comment type="PTM">
    <text evidence="2">Glycosylated; contains keratan sulfate.</text>
</comment>
<comment type="similarity">
    <text evidence="5">Belongs to the small leucine-rich proteoglycan (SLRP) family. SLRP class II subfamily.</text>
</comment>
<accession>O35103</accession>